<protein>
    <recommendedName>
        <fullName evidence="1">Small ribosomal subunit protein uS9</fullName>
    </recommendedName>
    <alternativeName>
        <fullName evidence="2">30S ribosomal protein S9</fullName>
    </alternativeName>
</protein>
<gene>
    <name evidence="1" type="primary">rpsI</name>
    <name type="ordered locus">Sama_3070</name>
</gene>
<dbReference type="EMBL" id="CP000507">
    <property type="protein sequence ID" value="ABM01273.1"/>
    <property type="molecule type" value="Genomic_DNA"/>
</dbReference>
<dbReference type="RefSeq" id="WP_011761177.1">
    <property type="nucleotide sequence ID" value="NC_008700.1"/>
</dbReference>
<dbReference type="SMR" id="A1SA66"/>
<dbReference type="STRING" id="326297.Sama_3070"/>
<dbReference type="KEGG" id="saz:Sama_3070"/>
<dbReference type="eggNOG" id="COG0103">
    <property type="taxonomic scope" value="Bacteria"/>
</dbReference>
<dbReference type="HOGENOM" id="CLU_046483_2_1_6"/>
<dbReference type="OrthoDB" id="9803965at2"/>
<dbReference type="Proteomes" id="UP000009175">
    <property type="component" value="Chromosome"/>
</dbReference>
<dbReference type="GO" id="GO:0022627">
    <property type="term" value="C:cytosolic small ribosomal subunit"/>
    <property type="evidence" value="ECO:0007669"/>
    <property type="project" value="TreeGrafter"/>
</dbReference>
<dbReference type="GO" id="GO:0003723">
    <property type="term" value="F:RNA binding"/>
    <property type="evidence" value="ECO:0007669"/>
    <property type="project" value="TreeGrafter"/>
</dbReference>
<dbReference type="GO" id="GO:0003735">
    <property type="term" value="F:structural constituent of ribosome"/>
    <property type="evidence" value="ECO:0007669"/>
    <property type="project" value="InterPro"/>
</dbReference>
<dbReference type="GO" id="GO:0006412">
    <property type="term" value="P:translation"/>
    <property type="evidence" value="ECO:0007669"/>
    <property type="project" value="UniProtKB-UniRule"/>
</dbReference>
<dbReference type="FunFam" id="3.30.230.10:FF:000001">
    <property type="entry name" value="30S ribosomal protein S9"/>
    <property type="match status" value="1"/>
</dbReference>
<dbReference type="Gene3D" id="3.30.230.10">
    <property type="match status" value="1"/>
</dbReference>
<dbReference type="HAMAP" id="MF_00532_B">
    <property type="entry name" value="Ribosomal_uS9_B"/>
    <property type="match status" value="1"/>
</dbReference>
<dbReference type="InterPro" id="IPR020568">
    <property type="entry name" value="Ribosomal_Su5_D2-typ_SF"/>
</dbReference>
<dbReference type="InterPro" id="IPR000754">
    <property type="entry name" value="Ribosomal_uS9"/>
</dbReference>
<dbReference type="InterPro" id="IPR023035">
    <property type="entry name" value="Ribosomal_uS9_bac/plastid"/>
</dbReference>
<dbReference type="InterPro" id="IPR020574">
    <property type="entry name" value="Ribosomal_uS9_CS"/>
</dbReference>
<dbReference type="InterPro" id="IPR014721">
    <property type="entry name" value="Ribsml_uS5_D2-typ_fold_subgr"/>
</dbReference>
<dbReference type="NCBIfam" id="NF001099">
    <property type="entry name" value="PRK00132.1"/>
    <property type="match status" value="1"/>
</dbReference>
<dbReference type="PANTHER" id="PTHR21569">
    <property type="entry name" value="RIBOSOMAL PROTEIN S9"/>
    <property type="match status" value="1"/>
</dbReference>
<dbReference type="PANTHER" id="PTHR21569:SF1">
    <property type="entry name" value="SMALL RIBOSOMAL SUBUNIT PROTEIN US9M"/>
    <property type="match status" value="1"/>
</dbReference>
<dbReference type="Pfam" id="PF00380">
    <property type="entry name" value="Ribosomal_S9"/>
    <property type="match status" value="1"/>
</dbReference>
<dbReference type="SUPFAM" id="SSF54211">
    <property type="entry name" value="Ribosomal protein S5 domain 2-like"/>
    <property type="match status" value="1"/>
</dbReference>
<dbReference type="PROSITE" id="PS00360">
    <property type="entry name" value="RIBOSOMAL_S9"/>
    <property type="match status" value="1"/>
</dbReference>
<comment type="similarity">
    <text evidence="1">Belongs to the universal ribosomal protein uS9 family.</text>
</comment>
<name>RS9_SHEAM</name>
<proteinExistence type="inferred from homology"/>
<accession>A1SA66</accession>
<organism>
    <name type="scientific">Shewanella amazonensis (strain ATCC BAA-1098 / SB2B)</name>
    <dbReference type="NCBI Taxonomy" id="326297"/>
    <lineage>
        <taxon>Bacteria</taxon>
        <taxon>Pseudomonadati</taxon>
        <taxon>Pseudomonadota</taxon>
        <taxon>Gammaproteobacteria</taxon>
        <taxon>Alteromonadales</taxon>
        <taxon>Shewanellaceae</taxon>
        <taxon>Shewanella</taxon>
    </lineage>
</organism>
<reference key="1">
    <citation type="submission" date="2006-12" db="EMBL/GenBank/DDBJ databases">
        <title>Complete sequence of Shewanella amazonensis SB2B.</title>
        <authorList>
            <consortium name="US DOE Joint Genome Institute"/>
            <person name="Copeland A."/>
            <person name="Lucas S."/>
            <person name="Lapidus A."/>
            <person name="Barry K."/>
            <person name="Detter J.C."/>
            <person name="Glavina del Rio T."/>
            <person name="Hammon N."/>
            <person name="Israni S."/>
            <person name="Dalin E."/>
            <person name="Tice H."/>
            <person name="Pitluck S."/>
            <person name="Munk A.C."/>
            <person name="Brettin T."/>
            <person name="Bruce D."/>
            <person name="Han C."/>
            <person name="Tapia R."/>
            <person name="Gilna P."/>
            <person name="Schmutz J."/>
            <person name="Larimer F."/>
            <person name="Land M."/>
            <person name="Hauser L."/>
            <person name="Kyrpides N."/>
            <person name="Mikhailova N."/>
            <person name="Fredrickson J."/>
            <person name="Richardson P."/>
        </authorList>
    </citation>
    <scope>NUCLEOTIDE SEQUENCE [LARGE SCALE GENOMIC DNA]</scope>
    <source>
        <strain>ATCC BAA-1098 / SB2B</strain>
    </source>
</reference>
<feature type="chain" id="PRO_1000051317" description="Small ribosomal subunit protein uS9">
    <location>
        <begin position="1"/>
        <end position="130"/>
    </location>
</feature>
<keyword id="KW-1185">Reference proteome</keyword>
<keyword id="KW-0687">Ribonucleoprotein</keyword>
<keyword id="KW-0689">Ribosomal protein</keyword>
<sequence length="130" mass="14606">MAATQYYGTGRRKTSTARVFAKVGSGNIIVNKRPLDVYFGRETARMVVRQPLELVEMTEKLDIYVTVKGGGITGQAGAIRHGITRALMELDESLRPTLRAAGFVTRDARQVERKKVGLRKARRRPQFSKR</sequence>
<evidence type="ECO:0000255" key="1">
    <source>
        <dbReference type="HAMAP-Rule" id="MF_00532"/>
    </source>
</evidence>
<evidence type="ECO:0000305" key="2"/>